<keyword id="KW-0997">Cell inner membrane</keyword>
<keyword id="KW-1003">Cell membrane</keyword>
<keyword id="KW-0143">Chaperone</keyword>
<keyword id="KW-0472">Membrane</keyword>
<keyword id="KW-1185">Reference proteome</keyword>
<keyword id="KW-0812">Transmembrane</keyword>
<keyword id="KW-1133">Transmembrane helix</keyword>
<evidence type="ECO:0000255" key="1">
    <source>
        <dbReference type="HAMAP-Rule" id="MF_01153"/>
    </source>
</evidence>
<reference key="1">
    <citation type="journal article" date="2002" name="Nucleic Acids Res.">
        <title>Genome sequence of Shigella flexneri 2a: insights into pathogenicity through comparison with genomes of Escherichia coli K12 and O157.</title>
        <authorList>
            <person name="Jin Q."/>
            <person name="Yuan Z."/>
            <person name="Xu J."/>
            <person name="Wang Y."/>
            <person name="Shen Y."/>
            <person name="Lu W."/>
            <person name="Wang J."/>
            <person name="Liu H."/>
            <person name="Yang J."/>
            <person name="Yang F."/>
            <person name="Zhang X."/>
            <person name="Zhang J."/>
            <person name="Yang G."/>
            <person name="Wu H."/>
            <person name="Qu D."/>
            <person name="Dong J."/>
            <person name="Sun L."/>
            <person name="Xue Y."/>
            <person name="Zhao A."/>
            <person name="Gao Y."/>
            <person name="Zhu J."/>
            <person name="Kan B."/>
            <person name="Ding K."/>
            <person name="Chen S."/>
            <person name="Cheng H."/>
            <person name="Yao Z."/>
            <person name="He B."/>
            <person name="Chen R."/>
            <person name="Ma D."/>
            <person name="Qiang B."/>
            <person name="Wen Y."/>
            <person name="Hou Y."/>
            <person name="Yu J."/>
        </authorList>
    </citation>
    <scope>NUCLEOTIDE SEQUENCE [LARGE SCALE GENOMIC DNA]</scope>
    <source>
        <strain>301 / Serotype 2a</strain>
    </source>
</reference>
<reference key="2">
    <citation type="journal article" date="2003" name="Infect. Immun.">
        <title>Complete genome sequence and comparative genomics of Shigella flexneri serotype 2a strain 2457T.</title>
        <authorList>
            <person name="Wei J."/>
            <person name="Goldberg M.B."/>
            <person name="Burland V."/>
            <person name="Venkatesan M.M."/>
            <person name="Deng W."/>
            <person name="Fournier G."/>
            <person name="Mayhew G.F."/>
            <person name="Plunkett G. III"/>
            <person name="Rose D.J."/>
            <person name="Darling A."/>
            <person name="Mau B."/>
            <person name="Perna N.T."/>
            <person name="Payne S.M."/>
            <person name="Runyen-Janecky L.J."/>
            <person name="Zhou S."/>
            <person name="Schwartz D.C."/>
            <person name="Blattner F.R."/>
        </authorList>
    </citation>
    <scope>NUCLEOTIDE SEQUENCE [LARGE SCALE GENOMIC DNA]</scope>
    <source>
        <strain>ATCC 700930 / 2457T / Serotype 2a</strain>
    </source>
</reference>
<comment type="function">
    <text evidence="1">Regulatory DnaK co-chaperone. Direct interaction between DnaK and DjlA is needed for the induction of the wcaABCDE operon, involved in the synthesis of a colanic acid polysaccharide capsule, possibly through activation of the RcsB/RcsC phosphotransfer signaling pathway. The colanic acid capsule may help the bacterium survive conditions outside the host.</text>
</comment>
<comment type="subunit">
    <text evidence="1">Homodimer.</text>
</comment>
<comment type="subcellular location">
    <subcellularLocation>
        <location evidence="1">Cell inner membrane</location>
        <topology evidence="1">Single-pass type III membrane protein</topology>
    </subcellularLocation>
</comment>
<comment type="domain">
    <text evidence="1">The transmembrane domain is a dimerization domain.</text>
</comment>
<sequence length="271" mass="30565">MQYWGKIIGVAVALLMGGGFWGVVLGLLIGHMFDKARSRKMAWFANQRERQALFFATTFEVMGHLTKSKGRVTEADIHIASQLMDRMNLHGASRTAAQNAFRVGKSDNYPLREKMRQFRSVCFGRFDLIRMFLEIQIQAAFADGSLHPNERAVLYVIAEELGISRAQFDQFLRMMQGGAQFGGGYQQQSGGGNWQQAQRGPTLEDACNVLGVKPTDDATTIKRAYRKLMSEHHPDKLVAKGLPPEMMEMAKQKAQEIQQAYELIKQQKGFK</sequence>
<feature type="chain" id="PRO_0000209439" description="Co-chaperone protein DjlA">
    <location>
        <begin position="1"/>
        <end position="271"/>
    </location>
</feature>
<feature type="topological domain" description="Periplasmic" evidence="1">
    <location>
        <begin position="1"/>
        <end position="6"/>
    </location>
</feature>
<feature type="transmembrane region" description="Helical" evidence="1">
    <location>
        <begin position="7"/>
        <end position="31"/>
    </location>
</feature>
<feature type="topological domain" description="Cytoplasmic" evidence="1">
    <location>
        <begin position="32"/>
        <end position="271"/>
    </location>
</feature>
<feature type="domain" description="J" evidence="1">
    <location>
        <begin position="205"/>
        <end position="271"/>
    </location>
</feature>
<proteinExistence type="inferred from homology"/>
<organism>
    <name type="scientific">Shigella flexneri</name>
    <dbReference type="NCBI Taxonomy" id="623"/>
    <lineage>
        <taxon>Bacteria</taxon>
        <taxon>Pseudomonadati</taxon>
        <taxon>Pseudomonadota</taxon>
        <taxon>Gammaproteobacteria</taxon>
        <taxon>Enterobacterales</taxon>
        <taxon>Enterobacteriaceae</taxon>
        <taxon>Shigella</taxon>
    </lineage>
</organism>
<protein>
    <recommendedName>
        <fullName evidence="1">Co-chaperone protein DjlA</fullName>
    </recommendedName>
</protein>
<name>DJLA_SHIFL</name>
<dbReference type="EMBL" id="AE005674">
    <property type="protein sequence ID" value="AAN41718.2"/>
    <property type="molecule type" value="Genomic_DNA"/>
</dbReference>
<dbReference type="EMBL" id="AE014073">
    <property type="protein sequence ID" value="AAP15598.1"/>
    <property type="molecule type" value="Genomic_DNA"/>
</dbReference>
<dbReference type="RefSeq" id="NP_706011.2">
    <property type="nucleotide sequence ID" value="NC_004337.2"/>
</dbReference>
<dbReference type="RefSeq" id="WP_001200573.1">
    <property type="nucleotide sequence ID" value="NZ_WPGW01000005.1"/>
</dbReference>
<dbReference type="SMR" id="Q7UDT6"/>
<dbReference type="STRING" id="198214.SF0052"/>
<dbReference type="PaxDb" id="198214-SF0052"/>
<dbReference type="GeneID" id="1024576"/>
<dbReference type="GeneID" id="93777380"/>
<dbReference type="KEGG" id="sfl:SF0052"/>
<dbReference type="KEGG" id="sfx:S0054"/>
<dbReference type="PATRIC" id="fig|198214.7.peg.61"/>
<dbReference type="HOGENOM" id="CLU_066221_1_0_6"/>
<dbReference type="Proteomes" id="UP000001006">
    <property type="component" value="Chromosome"/>
</dbReference>
<dbReference type="Proteomes" id="UP000002673">
    <property type="component" value="Chromosome"/>
</dbReference>
<dbReference type="GO" id="GO:0005886">
    <property type="term" value="C:plasma membrane"/>
    <property type="evidence" value="ECO:0007669"/>
    <property type="project" value="UniProtKB-SubCell"/>
</dbReference>
<dbReference type="GO" id="GO:0051087">
    <property type="term" value="F:protein-folding chaperone binding"/>
    <property type="evidence" value="ECO:0007669"/>
    <property type="project" value="InterPro"/>
</dbReference>
<dbReference type="CDD" id="cd06257">
    <property type="entry name" value="DnaJ"/>
    <property type="match status" value="1"/>
</dbReference>
<dbReference type="CDD" id="cd07316">
    <property type="entry name" value="terB_like_DjlA"/>
    <property type="match status" value="1"/>
</dbReference>
<dbReference type="FunFam" id="1.10.287.110:FF:000011">
    <property type="entry name" value="Co-chaperone protein DjlA"/>
    <property type="match status" value="1"/>
</dbReference>
<dbReference type="FunFam" id="1.10.3680.10:FF:000001">
    <property type="entry name" value="Co-chaperone protein DjlA"/>
    <property type="match status" value="1"/>
</dbReference>
<dbReference type="Gene3D" id="1.10.287.110">
    <property type="entry name" value="DnaJ domain"/>
    <property type="match status" value="1"/>
</dbReference>
<dbReference type="Gene3D" id="1.10.3680.10">
    <property type="entry name" value="TerB-like"/>
    <property type="match status" value="1"/>
</dbReference>
<dbReference type="HAMAP" id="MF_01153">
    <property type="entry name" value="DjlA"/>
    <property type="match status" value="1"/>
</dbReference>
<dbReference type="InterPro" id="IPR023749">
    <property type="entry name" value="DjlA"/>
</dbReference>
<dbReference type="InterPro" id="IPR050817">
    <property type="entry name" value="DjlA_DnaK_co-chaperone"/>
</dbReference>
<dbReference type="InterPro" id="IPR007791">
    <property type="entry name" value="DjlA_N"/>
</dbReference>
<dbReference type="InterPro" id="IPR001623">
    <property type="entry name" value="DnaJ_domain"/>
</dbReference>
<dbReference type="InterPro" id="IPR036869">
    <property type="entry name" value="J_dom_sf"/>
</dbReference>
<dbReference type="InterPro" id="IPR029024">
    <property type="entry name" value="TerB-like"/>
</dbReference>
<dbReference type="NCBIfam" id="NF006948">
    <property type="entry name" value="PRK09430.1"/>
    <property type="match status" value="1"/>
</dbReference>
<dbReference type="PANTHER" id="PTHR24074">
    <property type="entry name" value="CO-CHAPERONE PROTEIN DJLA"/>
    <property type="match status" value="1"/>
</dbReference>
<dbReference type="Pfam" id="PF00226">
    <property type="entry name" value="DnaJ"/>
    <property type="match status" value="1"/>
</dbReference>
<dbReference type="Pfam" id="PF05099">
    <property type="entry name" value="TerB"/>
    <property type="match status" value="1"/>
</dbReference>
<dbReference type="PRINTS" id="PR00625">
    <property type="entry name" value="JDOMAIN"/>
</dbReference>
<dbReference type="SMART" id="SM00271">
    <property type="entry name" value="DnaJ"/>
    <property type="match status" value="1"/>
</dbReference>
<dbReference type="SUPFAM" id="SSF46565">
    <property type="entry name" value="Chaperone J-domain"/>
    <property type="match status" value="1"/>
</dbReference>
<dbReference type="PROSITE" id="PS50076">
    <property type="entry name" value="DNAJ_2"/>
    <property type="match status" value="1"/>
</dbReference>
<gene>
    <name evidence="1" type="primary">djlA</name>
    <name type="ordered locus">SF0052</name>
    <name type="ordered locus">S0054</name>
</gene>
<accession>Q7UDT6</accession>
<accession>Q83SP9</accession>